<sequence length="452" mass="48728">MKVISNFQNKKILILGLAKSGEAAAKLLTKLGALVTVNDSKPFDQNPAAQALLEEGIKVICGSHPVELLDEDFEYMVKNPGIPYDNPMVKRALAKEIPILTEVELAYFVSEAPIIGITGSNGKTTTTTMIADVLNAGGQSALLSGNIGYPASKVVQKAIAGDTLVMELSSFQLVGVNAFRPHIAVITNLMPTHLDYHGSFEDYVAAKWMIQAQMTESDYLILNANQEISATLAKTTKATVIPFSTQKVVDGAYLKDGILYFKEQAIIAATDLGVPGSHNIENALATIAVAKLSGIADDIIAQCLSHFGGVKHRLQRVGQIKDITFYNDSKSTNILATQKALSGFDNSRLILIAGGLDRGNEFDDLVPDLLGLKQMIILGESAERMKRAANKAEVSYLEARNVAEATELAFKLAQTGDTILLSPANASWDMYPNFEVRGDEFLATFDCLRGDA</sequence>
<name>MURD_STRPM</name>
<gene>
    <name evidence="1" type="primary">murD</name>
    <name type="ordered locus">M28_Spy1192</name>
</gene>
<keyword id="KW-0067">ATP-binding</keyword>
<keyword id="KW-0131">Cell cycle</keyword>
<keyword id="KW-0132">Cell division</keyword>
<keyword id="KW-0133">Cell shape</keyword>
<keyword id="KW-0961">Cell wall biogenesis/degradation</keyword>
<keyword id="KW-0963">Cytoplasm</keyword>
<keyword id="KW-0436">Ligase</keyword>
<keyword id="KW-0547">Nucleotide-binding</keyword>
<keyword id="KW-0573">Peptidoglycan synthesis</keyword>
<accession>Q48SK8</accession>
<comment type="function">
    <text evidence="1">Cell wall formation. Catalyzes the addition of glutamate to the nucleotide precursor UDP-N-acetylmuramoyl-L-alanine (UMA).</text>
</comment>
<comment type="catalytic activity">
    <reaction evidence="1">
        <text>UDP-N-acetyl-alpha-D-muramoyl-L-alanine + D-glutamate + ATP = UDP-N-acetyl-alpha-D-muramoyl-L-alanyl-D-glutamate + ADP + phosphate + H(+)</text>
        <dbReference type="Rhea" id="RHEA:16429"/>
        <dbReference type="ChEBI" id="CHEBI:15378"/>
        <dbReference type="ChEBI" id="CHEBI:29986"/>
        <dbReference type="ChEBI" id="CHEBI:30616"/>
        <dbReference type="ChEBI" id="CHEBI:43474"/>
        <dbReference type="ChEBI" id="CHEBI:83898"/>
        <dbReference type="ChEBI" id="CHEBI:83900"/>
        <dbReference type="ChEBI" id="CHEBI:456216"/>
        <dbReference type="EC" id="6.3.2.9"/>
    </reaction>
</comment>
<comment type="pathway">
    <text evidence="1">Cell wall biogenesis; peptidoglycan biosynthesis.</text>
</comment>
<comment type="subcellular location">
    <subcellularLocation>
        <location evidence="1">Cytoplasm</location>
    </subcellularLocation>
</comment>
<comment type="similarity">
    <text evidence="1">Belongs to the MurCDEF family.</text>
</comment>
<dbReference type="EC" id="6.3.2.9" evidence="1"/>
<dbReference type="EMBL" id="CP000056">
    <property type="protein sequence ID" value="AAX72302.1"/>
    <property type="molecule type" value="Genomic_DNA"/>
</dbReference>
<dbReference type="RefSeq" id="WP_011284958.1">
    <property type="nucleotide sequence ID" value="NC_007296.2"/>
</dbReference>
<dbReference type="SMR" id="Q48SK8"/>
<dbReference type="KEGG" id="spb:M28_Spy1192"/>
<dbReference type="HOGENOM" id="CLU_032540_0_1_9"/>
<dbReference type="UniPathway" id="UPA00219"/>
<dbReference type="GO" id="GO:0005737">
    <property type="term" value="C:cytoplasm"/>
    <property type="evidence" value="ECO:0007669"/>
    <property type="project" value="UniProtKB-SubCell"/>
</dbReference>
<dbReference type="GO" id="GO:0005524">
    <property type="term" value="F:ATP binding"/>
    <property type="evidence" value="ECO:0007669"/>
    <property type="project" value="UniProtKB-UniRule"/>
</dbReference>
<dbReference type="GO" id="GO:0008764">
    <property type="term" value="F:UDP-N-acetylmuramoylalanine-D-glutamate ligase activity"/>
    <property type="evidence" value="ECO:0007669"/>
    <property type="project" value="UniProtKB-UniRule"/>
</dbReference>
<dbReference type="GO" id="GO:0051301">
    <property type="term" value="P:cell division"/>
    <property type="evidence" value="ECO:0007669"/>
    <property type="project" value="UniProtKB-KW"/>
</dbReference>
<dbReference type="GO" id="GO:0071555">
    <property type="term" value="P:cell wall organization"/>
    <property type="evidence" value="ECO:0007669"/>
    <property type="project" value="UniProtKB-KW"/>
</dbReference>
<dbReference type="GO" id="GO:0009252">
    <property type="term" value="P:peptidoglycan biosynthetic process"/>
    <property type="evidence" value="ECO:0007669"/>
    <property type="project" value="UniProtKB-UniRule"/>
</dbReference>
<dbReference type="GO" id="GO:0008360">
    <property type="term" value="P:regulation of cell shape"/>
    <property type="evidence" value="ECO:0007669"/>
    <property type="project" value="UniProtKB-KW"/>
</dbReference>
<dbReference type="Gene3D" id="3.90.190.20">
    <property type="entry name" value="Mur ligase, C-terminal domain"/>
    <property type="match status" value="1"/>
</dbReference>
<dbReference type="Gene3D" id="3.40.1190.10">
    <property type="entry name" value="Mur-like, catalytic domain"/>
    <property type="match status" value="1"/>
</dbReference>
<dbReference type="Gene3D" id="3.40.50.720">
    <property type="entry name" value="NAD(P)-binding Rossmann-like Domain"/>
    <property type="match status" value="1"/>
</dbReference>
<dbReference type="HAMAP" id="MF_00639">
    <property type="entry name" value="MurD"/>
    <property type="match status" value="1"/>
</dbReference>
<dbReference type="InterPro" id="IPR036565">
    <property type="entry name" value="Mur-like_cat_sf"/>
</dbReference>
<dbReference type="InterPro" id="IPR004101">
    <property type="entry name" value="Mur_ligase_C"/>
</dbReference>
<dbReference type="InterPro" id="IPR036615">
    <property type="entry name" value="Mur_ligase_C_dom_sf"/>
</dbReference>
<dbReference type="InterPro" id="IPR013221">
    <property type="entry name" value="Mur_ligase_cen"/>
</dbReference>
<dbReference type="InterPro" id="IPR005762">
    <property type="entry name" value="MurD"/>
</dbReference>
<dbReference type="NCBIfam" id="TIGR01087">
    <property type="entry name" value="murD"/>
    <property type="match status" value="1"/>
</dbReference>
<dbReference type="PANTHER" id="PTHR43692">
    <property type="entry name" value="UDP-N-ACETYLMURAMOYLALANINE--D-GLUTAMATE LIGASE"/>
    <property type="match status" value="1"/>
</dbReference>
<dbReference type="PANTHER" id="PTHR43692:SF1">
    <property type="entry name" value="UDP-N-ACETYLMURAMOYLALANINE--D-GLUTAMATE LIGASE"/>
    <property type="match status" value="1"/>
</dbReference>
<dbReference type="Pfam" id="PF02875">
    <property type="entry name" value="Mur_ligase_C"/>
    <property type="match status" value="1"/>
</dbReference>
<dbReference type="Pfam" id="PF08245">
    <property type="entry name" value="Mur_ligase_M"/>
    <property type="match status" value="1"/>
</dbReference>
<dbReference type="Pfam" id="PF21799">
    <property type="entry name" value="MurD-like_N"/>
    <property type="match status" value="1"/>
</dbReference>
<dbReference type="SUPFAM" id="SSF51984">
    <property type="entry name" value="MurCD N-terminal domain"/>
    <property type="match status" value="1"/>
</dbReference>
<dbReference type="SUPFAM" id="SSF53623">
    <property type="entry name" value="MurD-like peptide ligases, catalytic domain"/>
    <property type="match status" value="1"/>
</dbReference>
<dbReference type="SUPFAM" id="SSF53244">
    <property type="entry name" value="MurD-like peptide ligases, peptide-binding domain"/>
    <property type="match status" value="1"/>
</dbReference>
<reference key="1">
    <citation type="journal article" date="2005" name="J. Infect. Dis.">
        <title>Genome sequence of a serotype M28 strain of group A Streptococcus: potential new insights into puerperal sepsis and bacterial disease specificity.</title>
        <authorList>
            <person name="Green N.M."/>
            <person name="Zhang S."/>
            <person name="Porcella S.F."/>
            <person name="Nagiec M.J."/>
            <person name="Barbian K.D."/>
            <person name="Beres S.B."/>
            <person name="Lefebvre R.B."/>
            <person name="Musser J.M."/>
        </authorList>
    </citation>
    <scope>NUCLEOTIDE SEQUENCE [LARGE SCALE GENOMIC DNA]</scope>
    <source>
        <strain>MGAS6180</strain>
    </source>
</reference>
<protein>
    <recommendedName>
        <fullName evidence="1">UDP-N-acetylmuramoylalanine--D-glutamate ligase</fullName>
        <ecNumber evidence="1">6.3.2.9</ecNumber>
    </recommendedName>
    <alternativeName>
        <fullName evidence="1">D-glutamic acid-adding enzyme</fullName>
    </alternativeName>
    <alternativeName>
        <fullName evidence="1">UDP-N-acetylmuramoyl-L-alanyl-D-glutamate synthetase</fullName>
    </alternativeName>
</protein>
<evidence type="ECO:0000255" key="1">
    <source>
        <dbReference type="HAMAP-Rule" id="MF_00639"/>
    </source>
</evidence>
<feature type="chain" id="PRO_0000257250" description="UDP-N-acetylmuramoylalanine--D-glutamate ligase">
    <location>
        <begin position="1"/>
        <end position="452"/>
    </location>
</feature>
<feature type="binding site" evidence="1">
    <location>
        <begin position="119"/>
        <end position="125"/>
    </location>
    <ligand>
        <name>ATP</name>
        <dbReference type="ChEBI" id="CHEBI:30616"/>
    </ligand>
</feature>
<organism>
    <name type="scientific">Streptococcus pyogenes serotype M28 (strain MGAS6180)</name>
    <dbReference type="NCBI Taxonomy" id="319701"/>
    <lineage>
        <taxon>Bacteria</taxon>
        <taxon>Bacillati</taxon>
        <taxon>Bacillota</taxon>
        <taxon>Bacilli</taxon>
        <taxon>Lactobacillales</taxon>
        <taxon>Streptococcaceae</taxon>
        <taxon>Streptococcus</taxon>
    </lineage>
</organism>
<proteinExistence type="inferred from homology"/>